<dbReference type="EMBL" id="BA000031">
    <property type="protein sequence ID" value="BAC60316.1"/>
    <property type="molecule type" value="Genomic_DNA"/>
</dbReference>
<dbReference type="RefSeq" id="NP_798432.1">
    <property type="nucleotide sequence ID" value="NC_004603.1"/>
</dbReference>
<dbReference type="RefSeq" id="WP_004406112.1">
    <property type="nucleotide sequence ID" value="NC_004603.1"/>
</dbReference>
<dbReference type="SMR" id="P0A2W2"/>
<dbReference type="GeneID" id="97540578"/>
<dbReference type="KEGG" id="vpa:VP2053"/>
<dbReference type="PATRIC" id="fig|223926.6.peg.1963"/>
<dbReference type="eggNOG" id="COG0236">
    <property type="taxonomic scope" value="Bacteria"/>
</dbReference>
<dbReference type="HOGENOM" id="CLU_108696_5_1_6"/>
<dbReference type="UniPathway" id="UPA00094"/>
<dbReference type="PRO" id="PR:P0A2W2"/>
<dbReference type="Proteomes" id="UP000002493">
    <property type="component" value="Chromosome 1"/>
</dbReference>
<dbReference type="GO" id="GO:0005829">
    <property type="term" value="C:cytosol"/>
    <property type="evidence" value="ECO:0007669"/>
    <property type="project" value="TreeGrafter"/>
</dbReference>
<dbReference type="GO" id="GO:0016020">
    <property type="term" value="C:membrane"/>
    <property type="evidence" value="ECO:0007669"/>
    <property type="project" value="GOC"/>
</dbReference>
<dbReference type="GO" id="GO:0000035">
    <property type="term" value="F:acyl binding"/>
    <property type="evidence" value="ECO:0007669"/>
    <property type="project" value="TreeGrafter"/>
</dbReference>
<dbReference type="GO" id="GO:0000036">
    <property type="term" value="F:acyl carrier activity"/>
    <property type="evidence" value="ECO:0007669"/>
    <property type="project" value="UniProtKB-UniRule"/>
</dbReference>
<dbReference type="GO" id="GO:0009245">
    <property type="term" value="P:lipid A biosynthetic process"/>
    <property type="evidence" value="ECO:0007669"/>
    <property type="project" value="TreeGrafter"/>
</dbReference>
<dbReference type="FunFam" id="1.10.1200.10:FF:000001">
    <property type="entry name" value="Acyl carrier protein"/>
    <property type="match status" value="1"/>
</dbReference>
<dbReference type="Gene3D" id="1.10.1200.10">
    <property type="entry name" value="ACP-like"/>
    <property type="match status" value="1"/>
</dbReference>
<dbReference type="HAMAP" id="MF_01217">
    <property type="entry name" value="Acyl_carrier"/>
    <property type="match status" value="1"/>
</dbReference>
<dbReference type="InterPro" id="IPR003231">
    <property type="entry name" value="ACP"/>
</dbReference>
<dbReference type="InterPro" id="IPR036736">
    <property type="entry name" value="ACP-like_sf"/>
</dbReference>
<dbReference type="InterPro" id="IPR009081">
    <property type="entry name" value="PP-bd_ACP"/>
</dbReference>
<dbReference type="InterPro" id="IPR006162">
    <property type="entry name" value="Ppantetheine_attach_site"/>
</dbReference>
<dbReference type="NCBIfam" id="TIGR00517">
    <property type="entry name" value="acyl_carrier"/>
    <property type="match status" value="1"/>
</dbReference>
<dbReference type="NCBIfam" id="NF002148">
    <property type="entry name" value="PRK00982.1-2"/>
    <property type="match status" value="1"/>
</dbReference>
<dbReference type="NCBIfam" id="NF002149">
    <property type="entry name" value="PRK00982.1-3"/>
    <property type="match status" value="1"/>
</dbReference>
<dbReference type="NCBIfam" id="NF002150">
    <property type="entry name" value="PRK00982.1-4"/>
    <property type="match status" value="1"/>
</dbReference>
<dbReference type="NCBIfam" id="NF002151">
    <property type="entry name" value="PRK00982.1-5"/>
    <property type="match status" value="1"/>
</dbReference>
<dbReference type="PANTHER" id="PTHR20863">
    <property type="entry name" value="ACYL CARRIER PROTEIN"/>
    <property type="match status" value="1"/>
</dbReference>
<dbReference type="PANTHER" id="PTHR20863:SF76">
    <property type="entry name" value="CARRIER DOMAIN-CONTAINING PROTEIN"/>
    <property type="match status" value="1"/>
</dbReference>
<dbReference type="Pfam" id="PF00550">
    <property type="entry name" value="PP-binding"/>
    <property type="match status" value="1"/>
</dbReference>
<dbReference type="SUPFAM" id="SSF47336">
    <property type="entry name" value="ACP-like"/>
    <property type="match status" value="1"/>
</dbReference>
<dbReference type="PROSITE" id="PS50075">
    <property type="entry name" value="CARRIER"/>
    <property type="match status" value="1"/>
</dbReference>
<dbReference type="PROSITE" id="PS00012">
    <property type="entry name" value="PHOSPHOPANTETHEINE"/>
    <property type="match status" value="1"/>
</dbReference>
<reference key="1">
    <citation type="journal article" date="2003" name="Lancet">
        <title>Genome sequence of Vibrio parahaemolyticus: a pathogenic mechanism distinct from that of V. cholerae.</title>
        <authorList>
            <person name="Makino K."/>
            <person name="Oshima K."/>
            <person name="Kurokawa K."/>
            <person name="Yokoyama K."/>
            <person name="Uda T."/>
            <person name="Tagomori K."/>
            <person name="Iijima Y."/>
            <person name="Najima M."/>
            <person name="Nakano M."/>
            <person name="Yamashita A."/>
            <person name="Kubota Y."/>
            <person name="Kimura S."/>
            <person name="Yasunaga T."/>
            <person name="Honda T."/>
            <person name="Shinagawa H."/>
            <person name="Hattori M."/>
            <person name="Iida T."/>
        </authorList>
    </citation>
    <scope>NUCLEOTIDE SEQUENCE [LARGE SCALE GENOMIC DNA]</scope>
    <source>
        <strain>RIMD 2210633</strain>
    </source>
</reference>
<organism>
    <name type="scientific">Vibrio parahaemolyticus serotype O3:K6 (strain RIMD 2210633)</name>
    <dbReference type="NCBI Taxonomy" id="223926"/>
    <lineage>
        <taxon>Bacteria</taxon>
        <taxon>Pseudomonadati</taxon>
        <taxon>Pseudomonadota</taxon>
        <taxon>Gammaproteobacteria</taxon>
        <taxon>Vibrionales</taxon>
        <taxon>Vibrionaceae</taxon>
        <taxon>Vibrio</taxon>
    </lineage>
</organism>
<gene>
    <name evidence="2" type="primary">acpP</name>
    <name type="ordered locus">VP2053</name>
</gene>
<comment type="function">
    <text evidence="2">Carrier of the growing fatty acid chain in fatty acid biosynthesis.</text>
</comment>
<comment type="pathway">
    <text evidence="2">Lipid metabolism; fatty acid biosynthesis.</text>
</comment>
<comment type="subcellular location">
    <subcellularLocation>
        <location evidence="2">Cytoplasm</location>
    </subcellularLocation>
</comment>
<comment type="PTM">
    <text evidence="2">4'-phosphopantetheine is transferred from CoA to a specific serine of apo-ACP by AcpS. This modification is essential for activity because fatty acids are bound in thioester linkage to the sulfhydryl of the prosthetic group.</text>
</comment>
<comment type="similarity">
    <text evidence="2">Belongs to the acyl carrier protein (ACP) family.</text>
</comment>
<proteinExistence type="inferred from homology"/>
<keyword id="KW-0963">Cytoplasm</keyword>
<keyword id="KW-0275">Fatty acid biosynthesis</keyword>
<keyword id="KW-0276">Fatty acid metabolism</keyword>
<keyword id="KW-0444">Lipid biosynthesis</keyword>
<keyword id="KW-0443">Lipid metabolism</keyword>
<keyword id="KW-0596">Phosphopantetheine</keyword>
<keyword id="KW-0597">Phosphoprotein</keyword>
<name>ACP_VIBPA</name>
<protein>
    <recommendedName>
        <fullName evidence="2">Acyl carrier protein</fullName>
        <shortName evidence="2">ACP</shortName>
    </recommendedName>
</protein>
<sequence length="77" mass="8531">MSNIEERVKKIIVEQLGVDEAEVKNEASFVDDLGADSLDTVELVMALEEEFDTEIPDEEAEKITTVQAAIDYVNSAQ</sequence>
<feature type="initiator methionine" description="Removed" evidence="1">
    <location>
        <position position="1"/>
    </location>
</feature>
<feature type="chain" id="PRO_0000180216" description="Acyl carrier protein">
    <location>
        <begin position="2"/>
        <end position="77"/>
    </location>
</feature>
<feature type="domain" description="Carrier" evidence="3">
    <location>
        <begin position="2"/>
        <end position="77"/>
    </location>
</feature>
<feature type="modified residue" description="O-(pantetheine 4'-phosphoryl)serine" evidence="3">
    <location>
        <position position="37"/>
    </location>
</feature>
<accession>P0A2W2</accession>
<accession>P55337</accession>
<accession>Q9R506</accession>
<evidence type="ECO:0000250" key="1"/>
<evidence type="ECO:0000255" key="2">
    <source>
        <dbReference type="HAMAP-Rule" id="MF_01217"/>
    </source>
</evidence>
<evidence type="ECO:0000255" key="3">
    <source>
        <dbReference type="PROSITE-ProRule" id="PRU00258"/>
    </source>
</evidence>